<comment type="function">
    <text>May be involved in the regulation of muramidase-2 export.</text>
</comment>
<sequence>MQLLREVDFKQTRCNARDVLKNFRRLERMAGRSLIDIKSPIITDMPKAPKHGNKAEDAIIQMMDIEAERDAILAALMALSLISRQILYYSFCVPDSFSNYRISREVGYSERSIQRMKSEALIEFAEAYKHGRIIAYK</sequence>
<name>ARPU_ENTHA</name>
<keyword id="KW-0813">Transport</keyword>
<organism>
    <name type="scientific">Enterococcus hirae (strain ATCC 9790 / DSM 20160 / JCM 8729 / LMG 6399 / NBRC 3181 / NCIMB 6459 / NCDO 1258 / NCTC 12367 / WDCM 00089 / R)</name>
    <dbReference type="NCBI Taxonomy" id="768486"/>
    <lineage>
        <taxon>Bacteria</taxon>
        <taxon>Bacillati</taxon>
        <taxon>Bacillota</taxon>
        <taxon>Bacilli</taxon>
        <taxon>Lactobacillales</taxon>
        <taxon>Enterococcaceae</taxon>
        <taxon>Enterococcus</taxon>
    </lineage>
</organism>
<feature type="chain" id="PRO_0000064685" description="Putative autolysin regulatory protein ArpU">
    <location>
        <begin position="1"/>
        <end position="137"/>
    </location>
</feature>
<dbReference type="EMBL" id="Z50854">
    <property type="protein sequence ID" value="CAA90711.1"/>
    <property type="molecule type" value="Genomic_DNA"/>
</dbReference>
<dbReference type="EMBL" id="CP003504">
    <property type="protein sequence ID" value="AFM70813.1"/>
    <property type="molecule type" value="Genomic_DNA"/>
</dbReference>
<dbReference type="RefSeq" id="WP_002304479.1">
    <property type="nucleotide sequence ID" value="NZ_KB946231.1"/>
</dbReference>
<dbReference type="SMR" id="Q47836"/>
<dbReference type="KEGG" id="ehr:EHR_09525"/>
<dbReference type="eggNOG" id="ENOG502ZESF">
    <property type="taxonomic scope" value="Bacteria"/>
</dbReference>
<dbReference type="HOGENOM" id="CLU_150076_1_0_9"/>
<dbReference type="OrthoDB" id="2227133at2"/>
<dbReference type="Proteomes" id="UP000002895">
    <property type="component" value="Chromosome"/>
</dbReference>
<dbReference type="InterPro" id="IPR006524">
    <property type="entry name" value="ArpU-like"/>
</dbReference>
<dbReference type="NCBIfam" id="TIGR01637">
    <property type="entry name" value="phage_arpU"/>
    <property type="match status" value="1"/>
</dbReference>
<accession>Q47836</accession>
<accession>I6SDU4</accession>
<proteinExistence type="predicted"/>
<reference key="1">
    <citation type="journal article" date="1995" name="J. Bacteriol.">
        <title>Identification of a gene (arpU) controlling muramidase-2 export in Enterococcus hirae.</title>
        <authorList>
            <person name="del Mar Lleo M."/>
            <person name="Fontana R."/>
            <person name="Solioz M."/>
        </authorList>
    </citation>
    <scope>NUCLEOTIDE SEQUENCE [GENOMIC DNA]</scope>
    <source>
        <strain>ATCC 9790 / DSM 20160 / JCM 8729 / LMG 6399 / NBRC 3181 / NCIMB 6459 / NCDO 1258 / NCTC 12367 / WDCM 00089 / R</strain>
    </source>
</reference>
<reference key="2">
    <citation type="journal article" date="2012" name="J. Bacteriol.">
        <title>Genome sequence of Enterococcus hirae (Streptococcus faecalis) ATCC 9790, a model organism for the study of ion transport, bioenergetics, and copper homeostasis.</title>
        <authorList>
            <person name="Gaechter T."/>
            <person name="Wunderlin C."/>
            <person name="Schmidheini T."/>
            <person name="Solioz M."/>
        </authorList>
    </citation>
    <scope>NUCLEOTIDE SEQUENCE [LARGE SCALE GENOMIC DNA]</scope>
    <source>
        <strain>ATCC 9790 / DSM 20160 / JCM 8729 / LMG 6399 / NBRC 3181 / NCIMB 6459 / NCDO 1258 / NCTC 12367 / WDCM 00089 / R</strain>
    </source>
</reference>
<gene>
    <name type="primary">arpU</name>
    <name type="ordered locus">EHR_09525</name>
</gene>
<protein>
    <recommendedName>
        <fullName>Putative autolysin regulatory protein ArpU</fullName>
    </recommendedName>
</protein>